<proteinExistence type="evidence at protein level"/>
<sequence length="413" mass="47569">MEVQEFCENMEEIEDENYDEEKSARTSDENRKQNHSEIEKRRRDKMNTYINELSSMIPMCFAMQRKLDKLTVLRMAVQHLRGIRGSGSLHPFNGSDYRPSFLSDQELKMIILQASEGFLFVVGCDRGRILYVSDSVSSVLNSTQADLLGQSWFDVLHPKDIGKVKEQLSSLEQCPRERLIDAKTMLPVKTDVPQSLCRLCPGARRSFFCRMKLRTASNNQIKEESDTSSSSRSSTKRKSRLTTGHKYRVIQCTGYLKSWTPIKDEDQDADSDEQTTNLSCLVAIGRIPPNVRNSTVPASLDNHPNIRHVLFISRHSGEGKFLFIDQRATLVIGFLPQEILGTSFYEYFHNEDIAALMESHKMVMQVPEKVTTQVYRFRCKDNSYIQLQSEWRAFKNPWTSEIDYIIAKNSVFL</sequence>
<gene>
    <name type="primary">cyc</name>
    <name type="ORF">CG8727</name>
</gene>
<name>CYCL_DROME</name>
<accession>O61734</accession>
<accession>O76344</accession>
<accession>Q1LZ29</accession>
<accession>Q540W7</accession>
<accession>Q9VW44</accession>
<reference key="1">
    <citation type="journal article" date="1998" name="Cell">
        <title>CYCLE is a second bHLH-PAS clock protein essential for circadian rhythmicity and transcription of Drosophila period and timeless.</title>
        <authorList>
            <person name="Rutila J.E."/>
            <person name="Suri V."/>
            <person name="Le M."/>
            <person name="So W.V."/>
            <person name="Rosbash M."/>
            <person name="Hall J.C."/>
        </authorList>
    </citation>
    <scope>NUCLEOTIDE SEQUENCE [MRNA]</scope>
    <scope>DISRUPTION PHENOTYPE</scope>
    <source>
        <tissue>Ovary</tissue>
    </source>
</reference>
<reference key="2">
    <citation type="journal article" date="1998" name="Science">
        <title>Closing the circadian loop: CLOCK-induced transcription of its own inhibitors per and tim.</title>
        <authorList>
            <person name="Darlington T.K."/>
            <person name="Wager-Smith K."/>
            <person name="Ceriani M.F."/>
            <person name="Staknis D."/>
            <person name="Gekakis N."/>
            <person name="Steeves T.D.L."/>
            <person name="Weitz C.J."/>
            <person name="Takahashi J.S."/>
            <person name="Kay S.A."/>
        </authorList>
    </citation>
    <scope>NUCLEOTIDE SEQUENCE [MRNA]</scope>
    <source>
        <tissue>Brain</tissue>
        <tissue>Muscle</tissue>
    </source>
</reference>
<reference key="3">
    <citation type="submission" date="1998-06" db="EMBL/GenBank/DDBJ databases">
        <authorList>
            <person name="Bae K."/>
        </authorList>
    </citation>
    <scope>NUCLEOTIDE SEQUENCE [MRNA]</scope>
</reference>
<reference key="4">
    <citation type="journal article" date="2000" name="Science">
        <title>The genome sequence of Drosophila melanogaster.</title>
        <authorList>
            <person name="Adams M.D."/>
            <person name="Celniker S.E."/>
            <person name="Holt R.A."/>
            <person name="Evans C.A."/>
            <person name="Gocayne J.D."/>
            <person name="Amanatides P.G."/>
            <person name="Scherer S.E."/>
            <person name="Li P.W."/>
            <person name="Hoskins R.A."/>
            <person name="Galle R.F."/>
            <person name="George R.A."/>
            <person name="Lewis S.E."/>
            <person name="Richards S."/>
            <person name="Ashburner M."/>
            <person name="Henderson S.N."/>
            <person name="Sutton G.G."/>
            <person name="Wortman J.R."/>
            <person name="Yandell M.D."/>
            <person name="Zhang Q."/>
            <person name="Chen L.X."/>
            <person name="Brandon R.C."/>
            <person name="Rogers Y.-H.C."/>
            <person name="Blazej R.G."/>
            <person name="Champe M."/>
            <person name="Pfeiffer B.D."/>
            <person name="Wan K.H."/>
            <person name="Doyle C."/>
            <person name="Baxter E.G."/>
            <person name="Helt G."/>
            <person name="Nelson C.R."/>
            <person name="Miklos G.L.G."/>
            <person name="Abril J.F."/>
            <person name="Agbayani A."/>
            <person name="An H.-J."/>
            <person name="Andrews-Pfannkoch C."/>
            <person name="Baldwin D."/>
            <person name="Ballew R.M."/>
            <person name="Basu A."/>
            <person name="Baxendale J."/>
            <person name="Bayraktaroglu L."/>
            <person name="Beasley E.M."/>
            <person name="Beeson K.Y."/>
            <person name="Benos P.V."/>
            <person name="Berman B.P."/>
            <person name="Bhandari D."/>
            <person name="Bolshakov S."/>
            <person name="Borkova D."/>
            <person name="Botchan M.R."/>
            <person name="Bouck J."/>
            <person name="Brokstein P."/>
            <person name="Brottier P."/>
            <person name="Burtis K.C."/>
            <person name="Busam D.A."/>
            <person name="Butler H."/>
            <person name="Cadieu E."/>
            <person name="Center A."/>
            <person name="Chandra I."/>
            <person name="Cherry J.M."/>
            <person name="Cawley S."/>
            <person name="Dahlke C."/>
            <person name="Davenport L.B."/>
            <person name="Davies P."/>
            <person name="de Pablos B."/>
            <person name="Delcher A."/>
            <person name="Deng Z."/>
            <person name="Mays A.D."/>
            <person name="Dew I."/>
            <person name="Dietz S.M."/>
            <person name="Dodson K."/>
            <person name="Doup L.E."/>
            <person name="Downes M."/>
            <person name="Dugan-Rocha S."/>
            <person name="Dunkov B.C."/>
            <person name="Dunn P."/>
            <person name="Durbin K.J."/>
            <person name="Evangelista C.C."/>
            <person name="Ferraz C."/>
            <person name="Ferriera S."/>
            <person name="Fleischmann W."/>
            <person name="Fosler C."/>
            <person name="Gabrielian A.E."/>
            <person name="Garg N.S."/>
            <person name="Gelbart W.M."/>
            <person name="Glasser K."/>
            <person name="Glodek A."/>
            <person name="Gong F."/>
            <person name="Gorrell J.H."/>
            <person name="Gu Z."/>
            <person name="Guan P."/>
            <person name="Harris M."/>
            <person name="Harris N.L."/>
            <person name="Harvey D.A."/>
            <person name="Heiman T.J."/>
            <person name="Hernandez J.R."/>
            <person name="Houck J."/>
            <person name="Hostin D."/>
            <person name="Houston K.A."/>
            <person name="Howland T.J."/>
            <person name="Wei M.-H."/>
            <person name="Ibegwam C."/>
            <person name="Jalali M."/>
            <person name="Kalush F."/>
            <person name="Karpen G.H."/>
            <person name="Ke Z."/>
            <person name="Kennison J.A."/>
            <person name="Ketchum K.A."/>
            <person name="Kimmel B.E."/>
            <person name="Kodira C.D."/>
            <person name="Kraft C.L."/>
            <person name="Kravitz S."/>
            <person name="Kulp D."/>
            <person name="Lai Z."/>
            <person name="Lasko P."/>
            <person name="Lei Y."/>
            <person name="Levitsky A.A."/>
            <person name="Li J.H."/>
            <person name="Li Z."/>
            <person name="Liang Y."/>
            <person name="Lin X."/>
            <person name="Liu X."/>
            <person name="Mattei B."/>
            <person name="McIntosh T.C."/>
            <person name="McLeod M.P."/>
            <person name="McPherson D."/>
            <person name="Merkulov G."/>
            <person name="Milshina N.V."/>
            <person name="Mobarry C."/>
            <person name="Morris J."/>
            <person name="Moshrefi A."/>
            <person name="Mount S.M."/>
            <person name="Moy M."/>
            <person name="Murphy B."/>
            <person name="Murphy L."/>
            <person name="Muzny D.M."/>
            <person name="Nelson D.L."/>
            <person name="Nelson D.R."/>
            <person name="Nelson K.A."/>
            <person name="Nixon K."/>
            <person name="Nusskern D.R."/>
            <person name="Pacleb J.M."/>
            <person name="Palazzolo M."/>
            <person name="Pittman G.S."/>
            <person name="Pan S."/>
            <person name="Pollard J."/>
            <person name="Puri V."/>
            <person name="Reese M.G."/>
            <person name="Reinert K."/>
            <person name="Remington K."/>
            <person name="Saunders R.D.C."/>
            <person name="Scheeler F."/>
            <person name="Shen H."/>
            <person name="Shue B.C."/>
            <person name="Siden-Kiamos I."/>
            <person name="Simpson M."/>
            <person name="Skupski M.P."/>
            <person name="Smith T.J."/>
            <person name="Spier E."/>
            <person name="Spradling A.C."/>
            <person name="Stapleton M."/>
            <person name="Strong R."/>
            <person name="Sun E."/>
            <person name="Svirskas R."/>
            <person name="Tector C."/>
            <person name="Turner R."/>
            <person name="Venter E."/>
            <person name="Wang A.H."/>
            <person name="Wang X."/>
            <person name="Wang Z.-Y."/>
            <person name="Wassarman D.A."/>
            <person name="Weinstock G.M."/>
            <person name="Weissenbach J."/>
            <person name="Williams S.M."/>
            <person name="Woodage T."/>
            <person name="Worley K.C."/>
            <person name="Wu D."/>
            <person name="Yang S."/>
            <person name="Yao Q.A."/>
            <person name="Ye J."/>
            <person name="Yeh R.-F."/>
            <person name="Zaveri J.S."/>
            <person name="Zhan M."/>
            <person name="Zhang G."/>
            <person name="Zhao Q."/>
            <person name="Zheng L."/>
            <person name="Zheng X.H."/>
            <person name="Zhong F.N."/>
            <person name="Zhong W."/>
            <person name="Zhou X."/>
            <person name="Zhu S.C."/>
            <person name="Zhu X."/>
            <person name="Smith H.O."/>
            <person name="Gibbs R.A."/>
            <person name="Myers E.W."/>
            <person name="Rubin G.M."/>
            <person name="Venter J.C."/>
        </authorList>
    </citation>
    <scope>NUCLEOTIDE SEQUENCE [LARGE SCALE GENOMIC DNA]</scope>
    <source>
        <strain>Berkeley</strain>
    </source>
</reference>
<reference key="5">
    <citation type="journal article" date="2002" name="Genome Biol.">
        <title>Annotation of the Drosophila melanogaster euchromatic genome: a systematic review.</title>
        <authorList>
            <person name="Misra S."/>
            <person name="Crosby M.A."/>
            <person name="Mungall C.J."/>
            <person name="Matthews B.B."/>
            <person name="Campbell K.S."/>
            <person name="Hradecky P."/>
            <person name="Huang Y."/>
            <person name="Kaminker J.S."/>
            <person name="Millburn G.H."/>
            <person name="Prochnik S.E."/>
            <person name="Smith C.D."/>
            <person name="Tupy J.L."/>
            <person name="Whitfield E.J."/>
            <person name="Bayraktaroglu L."/>
            <person name="Berman B.P."/>
            <person name="Bettencourt B.R."/>
            <person name="Celniker S.E."/>
            <person name="de Grey A.D.N.J."/>
            <person name="Drysdale R.A."/>
            <person name="Harris N.L."/>
            <person name="Richter J."/>
            <person name="Russo S."/>
            <person name="Schroeder A.J."/>
            <person name="Shu S.Q."/>
            <person name="Stapleton M."/>
            <person name="Yamada C."/>
            <person name="Ashburner M."/>
            <person name="Gelbart W.M."/>
            <person name="Rubin G.M."/>
            <person name="Lewis S.E."/>
        </authorList>
    </citation>
    <scope>GENOME REANNOTATION</scope>
    <source>
        <strain>Berkeley</strain>
    </source>
</reference>
<reference key="6">
    <citation type="journal article" date="2002" name="Genome Biol.">
        <title>A Drosophila full-length cDNA resource.</title>
        <authorList>
            <person name="Stapleton M."/>
            <person name="Carlson J.W."/>
            <person name="Brokstein P."/>
            <person name="Yu C."/>
            <person name="Champe M."/>
            <person name="George R.A."/>
            <person name="Guarin H."/>
            <person name="Kronmiller B."/>
            <person name="Pacleb J.M."/>
            <person name="Park S."/>
            <person name="Wan K.H."/>
            <person name="Rubin G.M."/>
            <person name="Celniker S.E."/>
        </authorList>
    </citation>
    <scope>NUCLEOTIDE SEQUENCE [LARGE SCALE MRNA]</scope>
    <source>
        <strain>Berkeley</strain>
        <tissue>Embryo</tissue>
    </source>
</reference>
<reference key="7">
    <citation type="submission" date="2006-10" db="EMBL/GenBank/DDBJ databases">
        <authorList>
            <person name="Stapleton M."/>
            <person name="Carlson J.W."/>
            <person name="Frise E."/>
            <person name="Kapadia B."/>
            <person name="Park S."/>
            <person name="Wan K.H."/>
            <person name="Yu C."/>
            <person name="Celniker S.E."/>
        </authorList>
    </citation>
    <scope>NUCLEOTIDE SEQUENCE [LARGE SCALE MRNA]</scope>
    <source>
        <strain>Berkeley</strain>
    </source>
</reference>
<dbReference type="EMBL" id="AF065473">
    <property type="protein sequence ID" value="AAC39124.1"/>
    <property type="molecule type" value="mRNA"/>
</dbReference>
<dbReference type="EMBL" id="AF067206">
    <property type="protein sequence ID" value="AAD10629.1"/>
    <property type="molecule type" value="mRNA"/>
</dbReference>
<dbReference type="EMBL" id="AF069998">
    <property type="protein sequence ID" value="AAC62235.1"/>
    <property type="molecule type" value="mRNA"/>
</dbReference>
<dbReference type="EMBL" id="AE014296">
    <property type="protein sequence ID" value="AAF49107.1"/>
    <property type="molecule type" value="Genomic_DNA"/>
</dbReference>
<dbReference type="EMBL" id="AY119284">
    <property type="protein sequence ID" value="AAM51144.1"/>
    <property type="molecule type" value="mRNA"/>
</dbReference>
<dbReference type="EMBL" id="BT025197">
    <property type="protein sequence ID" value="ABF17888.1"/>
    <property type="molecule type" value="mRNA"/>
</dbReference>
<dbReference type="RefSeq" id="NP_524168.2">
    <property type="nucleotide sequence ID" value="NM_079444.3"/>
</dbReference>
<dbReference type="PDB" id="5F5Y">
    <property type="method" value="X-ray"/>
    <property type="resolution" value="2.20 A"/>
    <property type="chains" value="A=311-412"/>
</dbReference>
<dbReference type="PDB" id="5F68">
    <property type="method" value="X-ray"/>
    <property type="resolution" value="1.23 A"/>
    <property type="chains" value="A=311-412"/>
</dbReference>
<dbReference type="PDB" id="5F69">
    <property type="method" value="X-ray"/>
    <property type="resolution" value="1.37 A"/>
    <property type="chains" value="A=311-412"/>
</dbReference>
<dbReference type="PDB" id="5F6A">
    <property type="method" value="X-ray"/>
    <property type="resolution" value="1.93 A"/>
    <property type="chains" value="A=311-412"/>
</dbReference>
<dbReference type="PDBsum" id="5F5Y"/>
<dbReference type="PDBsum" id="5F68"/>
<dbReference type="PDBsum" id="5F69"/>
<dbReference type="PDBsum" id="5F6A"/>
<dbReference type="SMR" id="O61734"/>
<dbReference type="BioGRID" id="65431">
    <property type="interactions" value="10"/>
</dbReference>
<dbReference type="FunCoup" id="O61734">
    <property type="interactions" value="709"/>
</dbReference>
<dbReference type="IntAct" id="O61734">
    <property type="interactions" value="7"/>
</dbReference>
<dbReference type="MINT" id="O61734"/>
<dbReference type="STRING" id="7227.FBpp0074693"/>
<dbReference type="PaxDb" id="7227-FBpp0074693"/>
<dbReference type="DNASU" id="40162"/>
<dbReference type="EnsemblMetazoa" id="FBtr0074924">
    <property type="protein sequence ID" value="FBpp0074693"/>
    <property type="gene ID" value="FBgn0023094"/>
</dbReference>
<dbReference type="GeneID" id="40162"/>
<dbReference type="KEGG" id="dme:Dmel_CG8727"/>
<dbReference type="AGR" id="FB:FBgn0023094"/>
<dbReference type="CTD" id="40162"/>
<dbReference type="FlyBase" id="FBgn0023094">
    <property type="gene designation" value="cyc"/>
</dbReference>
<dbReference type="VEuPathDB" id="VectorBase:FBgn0023094"/>
<dbReference type="eggNOG" id="KOG3561">
    <property type="taxonomic scope" value="Eukaryota"/>
</dbReference>
<dbReference type="HOGENOM" id="CLU_011864_0_0_1"/>
<dbReference type="InParanoid" id="O61734"/>
<dbReference type="OMA" id="MEVQEFC"/>
<dbReference type="OrthoDB" id="71302at2759"/>
<dbReference type="PhylomeDB" id="O61734"/>
<dbReference type="Reactome" id="R-DME-432395">
    <property type="pathway name" value="Degradation of TIM"/>
</dbReference>
<dbReference type="Reactome" id="R-DME-432408">
    <property type="pathway name" value="Transcription regulation of cwo gene"/>
</dbReference>
<dbReference type="Reactome" id="R-DME-432501">
    <property type="pathway name" value="Transcription repression by PER and activation by PDP1"/>
</dbReference>
<dbReference type="Reactome" id="R-DME-432524">
    <property type="pathway name" value="Degradation of PER"/>
</dbReference>
<dbReference type="Reactome" id="R-DME-432560">
    <property type="pathway name" value="Transcription activation by CLK:CYC and repression by VRI"/>
</dbReference>
<dbReference type="Reactome" id="R-DME-432620">
    <property type="pathway name" value="Dephosphorylation of PER"/>
</dbReference>
<dbReference type="Reactome" id="R-DME-432626">
    <property type="pathway name" value="Circadian Clock pathway"/>
</dbReference>
<dbReference type="Reactome" id="R-DME-9768919">
    <property type="pathway name" value="NPAS4 regulates expression of target genes"/>
</dbReference>
<dbReference type="BioGRID-ORCS" id="40162">
    <property type="hits" value="0 hits in 3 CRISPR screens"/>
</dbReference>
<dbReference type="GenomeRNAi" id="40162"/>
<dbReference type="PRO" id="PR:O61734"/>
<dbReference type="Proteomes" id="UP000000803">
    <property type="component" value="Chromosome 3L"/>
</dbReference>
<dbReference type="Bgee" id="FBgn0023094">
    <property type="expression patterns" value="Expressed in adult abdomen and 131 other cell types or tissues"/>
</dbReference>
<dbReference type="GO" id="GO:0034751">
    <property type="term" value="C:aryl hydrocarbon receptor complex"/>
    <property type="evidence" value="ECO:0000318"/>
    <property type="project" value="GO_Central"/>
</dbReference>
<dbReference type="GO" id="GO:0005737">
    <property type="term" value="C:cytoplasm"/>
    <property type="evidence" value="ECO:0007669"/>
    <property type="project" value="InterPro"/>
</dbReference>
<dbReference type="GO" id="GO:0005654">
    <property type="term" value="C:nucleoplasm"/>
    <property type="evidence" value="ECO:0000304"/>
    <property type="project" value="Reactome"/>
</dbReference>
<dbReference type="GO" id="GO:0005634">
    <property type="term" value="C:nucleus"/>
    <property type="evidence" value="ECO:0000318"/>
    <property type="project" value="GO_Central"/>
</dbReference>
<dbReference type="GO" id="GO:0005667">
    <property type="term" value="C:transcription regulator complex"/>
    <property type="evidence" value="ECO:0007669"/>
    <property type="project" value="InterPro"/>
</dbReference>
<dbReference type="GO" id="GO:0003677">
    <property type="term" value="F:DNA binding"/>
    <property type="evidence" value="ECO:0000314"/>
    <property type="project" value="FlyBase"/>
</dbReference>
<dbReference type="GO" id="GO:0000981">
    <property type="term" value="F:DNA-binding transcription factor activity, RNA polymerase II-specific"/>
    <property type="evidence" value="ECO:0000318"/>
    <property type="project" value="GO_Central"/>
</dbReference>
<dbReference type="GO" id="GO:0046982">
    <property type="term" value="F:protein heterodimerization activity"/>
    <property type="evidence" value="ECO:0000353"/>
    <property type="project" value="FlyBase"/>
</dbReference>
<dbReference type="GO" id="GO:0000978">
    <property type="term" value="F:RNA polymerase II cis-regulatory region sequence-specific DNA binding"/>
    <property type="evidence" value="ECO:0000318"/>
    <property type="project" value="GO_Central"/>
</dbReference>
<dbReference type="GO" id="GO:0048148">
    <property type="term" value="P:behavioral response to cocaine"/>
    <property type="evidence" value="ECO:0000304"/>
    <property type="project" value="FlyBase"/>
</dbReference>
<dbReference type="GO" id="GO:0032922">
    <property type="term" value="P:circadian regulation of gene expression"/>
    <property type="evidence" value="ECO:0000315"/>
    <property type="project" value="FlyBase"/>
</dbReference>
<dbReference type="GO" id="GO:0003053">
    <property type="term" value="P:circadian regulation of heart rate"/>
    <property type="evidence" value="ECO:0000315"/>
    <property type="project" value="FlyBase"/>
</dbReference>
<dbReference type="GO" id="GO:0007623">
    <property type="term" value="P:circadian rhythm"/>
    <property type="evidence" value="ECO:0000304"/>
    <property type="project" value="FlyBase"/>
</dbReference>
<dbReference type="GO" id="GO:0008062">
    <property type="term" value="P:eclosion rhythm"/>
    <property type="evidence" value="ECO:0000304"/>
    <property type="project" value="FlyBase"/>
</dbReference>
<dbReference type="GO" id="GO:0045475">
    <property type="term" value="P:locomotor rhythm"/>
    <property type="evidence" value="ECO:0000304"/>
    <property type="project" value="FlyBase"/>
</dbReference>
<dbReference type="GO" id="GO:0045893">
    <property type="term" value="P:positive regulation of DNA-templated transcription"/>
    <property type="evidence" value="ECO:0000304"/>
    <property type="project" value="FlyBase"/>
</dbReference>
<dbReference type="GO" id="GO:0045944">
    <property type="term" value="P:positive regulation of transcription by RNA polymerase II"/>
    <property type="evidence" value="ECO:0000304"/>
    <property type="project" value="FlyBase"/>
</dbReference>
<dbReference type="GO" id="GO:0045187">
    <property type="term" value="P:regulation of circadian sleep/wake cycle, sleep"/>
    <property type="evidence" value="ECO:0000315"/>
    <property type="project" value="FlyBase"/>
</dbReference>
<dbReference type="GO" id="GO:0006357">
    <property type="term" value="P:regulation of transcription by RNA polymerase II"/>
    <property type="evidence" value="ECO:0000318"/>
    <property type="project" value="GO_Central"/>
</dbReference>
<dbReference type="GO" id="GO:0042594">
    <property type="term" value="P:response to starvation"/>
    <property type="evidence" value="ECO:0000314"/>
    <property type="project" value="FlyBase"/>
</dbReference>
<dbReference type="GO" id="GO:0007622">
    <property type="term" value="P:rhythmic behavior"/>
    <property type="evidence" value="ECO:0000304"/>
    <property type="project" value="FlyBase"/>
</dbReference>
<dbReference type="CDD" id="cd00130">
    <property type="entry name" value="PAS"/>
    <property type="match status" value="2"/>
</dbReference>
<dbReference type="FunFam" id="3.30.450.20:FF:000090">
    <property type="entry name" value="Uncharacterized protein, isoform B"/>
    <property type="match status" value="1"/>
</dbReference>
<dbReference type="FunFam" id="3.30.450.20:FF:000121">
    <property type="entry name" value="Uncharacterized protein, isoform B"/>
    <property type="match status" value="1"/>
</dbReference>
<dbReference type="Gene3D" id="4.10.280.10">
    <property type="entry name" value="Helix-loop-helix DNA-binding domain"/>
    <property type="match status" value="1"/>
</dbReference>
<dbReference type="Gene3D" id="3.30.450.20">
    <property type="entry name" value="PAS domain"/>
    <property type="match status" value="2"/>
</dbReference>
<dbReference type="InterPro" id="IPR011598">
    <property type="entry name" value="bHLH_dom"/>
</dbReference>
<dbReference type="InterPro" id="IPR050933">
    <property type="entry name" value="Circadian_TF"/>
</dbReference>
<dbReference type="InterPro" id="IPR036638">
    <property type="entry name" value="HLH_DNA-bd_sf"/>
</dbReference>
<dbReference type="InterPro" id="IPR001067">
    <property type="entry name" value="Nuc_translocat"/>
</dbReference>
<dbReference type="InterPro" id="IPR000014">
    <property type="entry name" value="PAS"/>
</dbReference>
<dbReference type="InterPro" id="IPR035965">
    <property type="entry name" value="PAS-like_dom_sf"/>
</dbReference>
<dbReference type="InterPro" id="IPR013767">
    <property type="entry name" value="PAS_fold"/>
</dbReference>
<dbReference type="PANTHER" id="PTHR23042">
    <property type="entry name" value="CIRCADIAN PROTEIN CLOCK/ARNT/BMAL/PAS"/>
    <property type="match status" value="1"/>
</dbReference>
<dbReference type="Pfam" id="PF00010">
    <property type="entry name" value="HLH"/>
    <property type="match status" value="1"/>
</dbReference>
<dbReference type="Pfam" id="PF00989">
    <property type="entry name" value="PAS"/>
    <property type="match status" value="1"/>
</dbReference>
<dbReference type="Pfam" id="PF14598">
    <property type="entry name" value="PAS_11"/>
    <property type="match status" value="1"/>
</dbReference>
<dbReference type="PRINTS" id="PR00785">
    <property type="entry name" value="NCTRNSLOCATR"/>
</dbReference>
<dbReference type="SMART" id="SM00353">
    <property type="entry name" value="HLH"/>
    <property type="match status" value="1"/>
</dbReference>
<dbReference type="SMART" id="SM00091">
    <property type="entry name" value="PAS"/>
    <property type="match status" value="2"/>
</dbReference>
<dbReference type="SUPFAM" id="SSF47459">
    <property type="entry name" value="HLH, helix-loop-helix DNA-binding domain"/>
    <property type="match status" value="1"/>
</dbReference>
<dbReference type="SUPFAM" id="SSF55785">
    <property type="entry name" value="PYP-like sensor domain (PAS domain)"/>
    <property type="match status" value="2"/>
</dbReference>
<dbReference type="PROSITE" id="PS50888">
    <property type="entry name" value="BHLH"/>
    <property type="match status" value="1"/>
</dbReference>
<dbReference type="PROSITE" id="PS50112">
    <property type="entry name" value="PAS"/>
    <property type="match status" value="2"/>
</dbReference>
<organism>
    <name type="scientific">Drosophila melanogaster</name>
    <name type="common">Fruit fly</name>
    <dbReference type="NCBI Taxonomy" id="7227"/>
    <lineage>
        <taxon>Eukaryota</taxon>
        <taxon>Metazoa</taxon>
        <taxon>Ecdysozoa</taxon>
        <taxon>Arthropoda</taxon>
        <taxon>Hexapoda</taxon>
        <taxon>Insecta</taxon>
        <taxon>Pterygota</taxon>
        <taxon>Neoptera</taxon>
        <taxon>Endopterygota</taxon>
        <taxon>Diptera</taxon>
        <taxon>Brachycera</taxon>
        <taxon>Muscomorpha</taxon>
        <taxon>Ephydroidea</taxon>
        <taxon>Drosophilidae</taxon>
        <taxon>Drosophila</taxon>
        <taxon>Sophophora</taxon>
    </lineage>
</organism>
<evidence type="ECO:0000250" key="1">
    <source>
        <dbReference type="UniProtKB" id="O00327"/>
    </source>
</evidence>
<evidence type="ECO:0000255" key="2">
    <source>
        <dbReference type="PROSITE-ProRule" id="PRU00140"/>
    </source>
</evidence>
<evidence type="ECO:0000255" key="3">
    <source>
        <dbReference type="PROSITE-ProRule" id="PRU00981"/>
    </source>
</evidence>
<evidence type="ECO:0000256" key="4">
    <source>
        <dbReference type="SAM" id="MobiDB-lite"/>
    </source>
</evidence>
<evidence type="ECO:0000269" key="5">
    <source>
    </source>
</evidence>
<evidence type="ECO:0000305" key="6"/>
<evidence type="ECO:0007829" key="7">
    <source>
        <dbReference type="PDB" id="5F68"/>
    </source>
</evidence>
<evidence type="ECO:0007829" key="8">
    <source>
        <dbReference type="PDB" id="5F69"/>
    </source>
</evidence>
<protein>
    <recommendedName>
        <fullName>Protein cycle</fullName>
    </recommendedName>
    <alternativeName>
        <fullName>Brain and muscle ARNT-like 1</fullName>
        <shortName>BMAL1</shortName>
    </alternativeName>
    <alternativeName>
        <fullName>MOP3</fullName>
    </alternativeName>
</protein>
<comment type="function">
    <text>Putative transcription factor involved in the generation of biological rhythms. Activates cycling transcription of Period (PER) and Timeless (TIM) by binding to the E-box (5'-CACGTG-3') present in their promoters.</text>
</comment>
<comment type="subunit">
    <text>Efficient DNA binding requires dimerization with another bHLH protein. Forms a heterodimer with Clock in order to activate PER and TIM transcription.</text>
</comment>
<comment type="interaction">
    <interactant intactId="EBI-87683">
        <id>O61734</id>
    </interactant>
    <interactant intactId="EBI-143834">
        <id>O61735</id>
        <label>Clk</label>
    </interactant>
    <organismsDiffer>false</organismsDiffer>
    <experiments>3</experiments>
</comment>
<comment type="subcellular location">
    <subcellularLocation>
        <location evidence="3">Nucleus</location>
    </subcellularLocation>
</comment>
<comment type="tissue specificity">
    <text>Expressed in head and ovary.</text>
</comment>
<comment type="disruption phenotype">
    <text evidence="5">Cyc mutants don't display PER and TIM cycling, and are completely arrhythmic.</text>
</comment>
<keyword id="KW-0002">3D-structure</keyword>
<keyword id="KW-0090">Biological rhythms</keyword>
<keyword id="KW-0238">DNA-binding</keyword>
<keyword id="KW-0539">Nucleus</keyword>
<keyword id="KW-1185">Reference proteome</keyword>
<keyword id="KW-0677">Repeat</keyword>
<keyword id="KW-0804">Transcription</keyword>
<keyword id="KW-0805">Transcription regulation</keyword>
<feature type="chain" id="PRO_0000127165" description="Protein cycle">
    <location>
        <begin position="1"/>
        <end position="413"/>
    </location>
</feature>
<feature type="domain" description="bHLH" evidence="3">
    <location>
        <begin position="30"/>
        <end position="83"/>
    </location>
</feature>
<feature type="domain" description="PAS 1" evidence="2">
    <location>
        <begin position="104"/>
        <end position="175"/>
    </location>
</feature>
<feature type="domain" description="PAS 2" evidence="2">
    <location>
        <begin position="297"/>
        <end position="367"/>
    </location>
</feature>
<feature type="domain" description="PAC">
    <location>
        <begin position="372"/>
        <end position="413"/>
    </location>
</feature>
<feature type="region of interest" description="Disordered" evidence="4">
    <location>
        <begin position="1"/>
        <end position="43"/>
    </location>
</feature>
<feature type="region of interest" description="Disordered" evidence="4">
    <location>
        <begin position="219"/>
        <end position="242"/>
    </location>
</feature>
<feature type="compositionally biased region" description="Acidic residues" evidence="4">
    <location>
        <begin position="8"/>
        <end position="19"/>
    </location>
</feature>
<feature type="compositionally biased region" description="Basic and acidic residues" evidence="4">
    <location>
        <begin position="20"/>
        <end position="41"/>
    </location>
</feature>
<feature type="site" description="Interaction with E-box DNA" evidence="1">
    <location>
        <position position="35"/>
    </location>
</feature>
<feature type="site" description="Interaction with E-box DNA" evidence="1">
    <location>
        <position position="38"/>
    </location>
</feature>
<feature type="site" description="Interaction with E-box DNA" evidence="1">
    <location>
        <position position="39"/>
    </location>
</feature>
<feature type="site" description="Interaction with E-box DNA" evidence="1">
    <location>
        <position position="43"/>
    </location>
</feature>
<feature type="sequence conflict" description="In Ref. 1; AAC39124, 2; AAD10629, 3; AAC62235 and 6; AAM51144." evidence="6" ref="1 2 3 6">
    <original>T</original>
    <variation>S</variation>
    <location>
        <position position="242"/>
    </location>
</feature>
<feature type="sequence conflict" description="In Ref. 1; AAC39124." evidence="6" ref="1">
    <original>H</original>
    <variation>Y</variation>
    <location>
        <position position="308"/>
    </location>
</feature>
<feature type="sequence conflict" description="In Ref. 1; AAC39124." evidence="6" ref="1">
    <original>M</original>
    <variation>V</variation>
    <location>
        <position position="362"/>
    </location>
</feature>
<feature type="strand" evidence="7">
    <location>
        <begin position="311"/>
        <end position="315"/>
    </location>
</feature>
<feature type="strand" evidence="7">
    <location>
        <begin position="320"/>
        <end position="324"/>
    </location>
</feature>
<feature type="helix" evidence="7">
    <location>
        <begin position="328"/>
        <end position="332"/>
    </location>
</feature>
<feature type="helix" evidence="7">
    <location>
        <begin position="336"/>
        <end position="339"/>
    </location>
</feature>
<feature type="helix" evidence="7">
    <location>
        <begin position="344"/>
        <end position="346"/>
    </location>
</feature>
<feature type="turn" evidence="7">
    <location>
        <begin position="350"/>
        <end position="352"/>
    </location>
</feature>
<feature type="helix" evidence="7">
    <location>
        <begin position="353"/>
        <end position="365"/>
    </location>
</feature>
<feature type="strand" evidence="8">
    <location>
        <begin position="366"/>
        <end position="368"/>
    </location>
</feature>
<feature type="strand" evidence="7">
    <location>
        <begin position="375"/>
        <end position="378"/>
    </location>
</feature>
<feature type="strand" evidence="7">
    <location>
        <begin position="384"/>
        <end position="395"/>
    </location>
</feature>
<feature type="turn" evidence="7">
    <location>
        <begin position="397"/>
        <end position="399"/>
    </location>
</feature>
<feature type="strand" evidence="7">
    <location>
        <begin position="402"/>
        <end position="411"/>
    </location>
</feature>